<feature type="chain" id="PRO_0000340749" description="3-hydroxyacyl-[acyl-carrier-protein] dehydratase FabZ">
    <location>
        <begin position="1"/>
        <end position="165"/>
    </location>
</feature>
<feature type="active site" evidence="1">
    <location>
        <position position="64"/>
    </location>
</feature>
<proteinExistence type="inferred from homology"/>
<name>FABZ_ACICJ</name>
<evidence type="ECO:0000255" key="1">
    <source>
        <dbReference type="HAMAP-Rule" id="MF_00406"/>
    </source>
</evidence>
<comment type="function">
    <text evidence="1">Involved in unsaturated fatty acids biosynthesis. Catalyzes the dehydration of short chain beta-hydroxyacyl-ACPs and long chain saturated and unsaturated beta-hydroxyacyl-ACPs.</text>
</comment>
<comment type="catalytic activity">
    <reaction evidence="1">
        <text>a (3R)-hydroxyacyl-[ACP] = a (2E)-enoyl-[ACP] + H2O</text>
        <dbReference type="Rhea" id="RHEA:13097"/>
        <dbReference type="Rhea" id="RHEA-COMP:9925"/>
        <dbReference type="Rhea" id="RHEA-COMP:9945"/>
        <dbReference type="ChEBI" id="CHEBI:15377"/>
        <dbReference type="ChEBI" id="CHEBI:78784"/>
        <dbReference type="ChEBI" id="CHEBI:78827"/>
        <dbReference type="EC" id="4.2.1.59"/>
    </reaction>
</comment>
<comment type="subcellular location">
    <subcellularLocation>
        <location evidence="1">Cytoplasm</location>
    </subcellularLocation>
</comment>
<comment type="similarity">
    <text evidence="1">Belongs to the thioester dehydratase family. FabZ subfamily.</text>
</comment>
<dbReference type="EC" id="4.2.1.59" evidence="1"/>
<dbReference type="EMBL" id="CP000697">
    <property type="protein sequence ID" value="ABQ31640.1"/>
    <property type="molecule type" value="Genomic_DNA"/>
</dbReference>
<dbReference type="RefSeq" id="WP_007423396.1">
    <property type="nucleotide sequence ID" value="NC_009484.1"/>
</dbReference>
<dbReference type="SMR" id="A5G1A8"/>
<dbReference type="STRING" id="349163.Acry_2447"/>
<dbReference type="KEGG" id="acr:Acry_2447"/>
<dbReference type="eggNOG" id="COG0764">
    <property type="taxonomic scope" value="Bacteria"/>
</dbReference>
<dbReference type="HOGENOM" id="CLU_078912_1_2_5"/>
<dbReference type="Proteomes" id="UP000000245">
    <property type="component" value="Chromosome"/>
</dbReference>
<dbReference type="GO" id="GO:0005737">
    <property type="term" value="C:cytoplasm"/>
    <property type="evidence" value="ECO:0007669"/>
    <property type="project" value="UniProtKB-SubCell"/>
</dbReference>
<dbReference type="GO" id="GO:0016020">
    <property type="term" value="C:membrane"/>
    <property type="evidence" value="ECO:0007669"/>
    <property type="project" value="GOC"/>
</dbReference>
<dbReference type="GO" id="GO:0019171">
    <property type="term" value="F:(3R)-hydroxyacyl-[acyl-carrier-protein] dehydratase activity"/>
    <property type="evidence" value="ECO:0007669"/>
    <property type="project" value="UniProtKB-EC"/>
</dbReference>
<dbReference type="GO" id="GO:0006633">
    <property type="term" value="P:fatty acid biosynthetic process"/>
    <property type="evidence" value="ECO:0007669"/>
    <property type="project" value="UniProtKB-UniRule"/>
</dbReference>
<dbReference type="GO" id="GO:0009245">
    <property type="term" value="P:lipid A biosynthetic process"/>
    <property type="evidence" value="ECO:0007669"/>
    <property type="project" value="UniProtKB-UniRule"/>
</dbReference>
<dbReference type="CDD" id="cd01288">
    <property type="entry name" value="FabZ"/>
    <property type="match status" value="1"/>
</dbReference>
<dbReference type="FunFam" id="3.10.129.10:FF:000001">
    <property type="entry name" value="3-hydroxyacyl-[acyl-carrier-protein] dehydratase FabZ"/>
    <property type="match status" value="1"/>
</dbReference>
<dbReference type="Gene3D" id="3.10.129.10">
    <property type="entry name" value="Hotdog Thioesterase"/>
    <property type="match status" value="1"/>
</dbReference>
<dbReference type="HAMAP" id="MF_00406">
    <property type="entry name" value="FabZ"/>
    <property type="match status" value="1"/>
</dbReference>
<dbReference type="InterPro" id="IPR013114">
    <property type="entry name" value="FabA_FabZ"/>
</dbReference>
<dbReference type="InterPro" id="IPR010084">
    <property type="entry name" value="FabZ"/>
</dbReference>
<dbReference type="InterPro" id="IPR029069">
    <property type="entry name" value="HotDog_dom_sf"/>
</dbReference>
<dbReference type="NCBIfam" id="TIGR01750">
    <property type="entry name" value="fabZ"/>
    <property type="match status" value="1"/>
</dbReference>
<dbReference type="NCBIfam" id="NF000582">
    <property type="entry name" value="PRK00006.1"/>
    <property type="match status" value="1"/>
</dbReference>
<dbReference type="PANTHER" id="PTHR30272">
    <property type="entry name" value="3-HYDROXYACYL-[ACYL-CARRIER-PROTEIN] DEHYDRATASE"/>
    <property type="match status" value="1"/>
</dbReference>
<dbReference type="PANTHER" id="PTHR30272:SF1">
    <property type="entry name" value="3-HYDROXYACYL-[ACYL-CARRIER-PROTEIN] DEHYDRATASE"/>
    <property type="match status" value="1"/>
</dbReference>
<dbReference type="Pfam" id="PF07977">
    <property type="entry name" value="FabA"/>
    <property type="match status" value="1"/>
</dbReference>
<dbReference type="SUPFAM" id="SSF54637">
    <property type="entry name" value="Thioesterase/thiol ester dehydrase-isomerase"/>
    <property type="match status" value="1"/>
</dbReference>
<reference key="1">
    <citation type="submission" date="2007-05" db="EMBL/GenBank/DDBJ databases">
        <title>Complete sequence of chromosome of Acidiphilium cryptum JF-5.</title>
        <authorList>
            <consortium name="US DOE Joint Genome Institute"/>
            <person name="Copeland A."/>
            <person name="Lucas S."/>
            <person name="Lapidus A."/>
            <person name="Barry K."/>
            <person name="Detter J.C."/>
            <person name="Glavina del Rio T."/>
            <person name="Hammon N."/>
            <person name="Israni S."/>
            <person name="Dalin E."/>
            <person name="Tice H."/>
            <person name="Pitluck S."/>
            <person name="Sims D."/>
            <person name="Brettin T."/>
            <person name="Bruce D."/>
            <person name="Han C."/>
            <person name="Schmutz J."/>
            <person name="Larimer F."/>
            <person name="Land M."/>
            <person name="Hauser L."/>
            <person name="Kyrpides N."/>
            <person name="Kim E."/>
            <person name="Magnuson T."/>
            <person name="Richardson P."/>
        </authorList>
    </citation>
    <scope>NUCLEOTIDE SEQUENCE [LARGE SCALE GENOMIC DNA]</scope>
    <source>
        <strain>JF-5</strain>
    </source>
</reference>
<protein>
    <recommendedName>
        <fullName evidence="1">3-hydroxyacyl-[acyl-carrier-protein] dehydratase FabZ</fullName>
        <ecNumber evidence="1">4.2.1.59</ecNumber>
    </recommendedName>
    <alternativeName>
        <fullName evidence="1">(3R)-hydroxymyristoyl-[acyl-carrier-protein] dehydratase</fullName>
        <shortName evidence="1">(3R)-hydroxymyristoyl-ACP dehydrase</shortName>
    </alternativeName>
    <alternativeName>
        <fullName evidence="1">Beta-hydroxyacyl-ACP dehydratase</fullName>
    </alternativeName>
</protein>
<organism>
    <name type="scientific">Acidiphilium cryptum (strain JF-5)</name>
    <dbReference type="NCBI Taxonomy" id="349163"/>
    <lineage>
        <taxon>Bacteria</taxon>
        <taxon>Pseudomonadati</taxon>
        <taxon>Pseudomonadota</taxon>
        <taxon>Alphaproteobacteria</taxon>
        <taxon>Acetobacterales</taxon>
        <taxon>Acidocellaceae</taxon>
        <taxon>Acidiphilium</taxon>
    </lineage>
</organism>
<gene>
    <name evidence="1" type="primary">fabZ</name>
    <name type="ordered locus">Acry_2447</name>
</gene>
<accession>A5G1A8</accession>
<keyword id="KW-0963">Cytoplasm</keyword>
<keyword id="KW-0441">Lipid A biosynthesis</keyword>
<keyword id="KW-0444">Lipid biosynthesis</keyword>
<keyword id="KW-0443">Lipid metabolism</keyword>
<keyword id="KW-0456">Lyase</keyword>
<keyword id="KW-1185">Reference proteome</keyword>
<sequence>MDGTSTDTSAQQAEGRTVDIAGIMRAIPHRYPFLLIDRVVELVPNVSAIGVKNVSVNESFFQGHFPGHPVMPGVLIIESMAQTAAVLVVETLGPEEAGKVVYFMSVEGAKFRRPVVPGDVLRIHVAKERNRGNVWKFNAVARVDGVAVAEATYAAMIMDKKAGEG</sequence>